<comment type="function">
    <text evidence="3">May have a special functional role during embryogenesis and in adult hematopoietic cells.</text>
</comment>
<comment type="subunit">
    <text>Binds to ubiquitin.</text>
</comment>
<comment type="subcellular location">
    <subcellularLocation>
        <location evidence="3">Lysosome membrane</location>
        <topology evidence="3">Multi-pass membrane protein</topology>
    </subcellularLocation>
</comment>
<comment type="tissue specificity">
    <text evidence="3">Preferentially expressed in adult hematopoietic tissues. High levels in lymphoid and myeloid tissues.</text>
</comment>
<comment type="developmental stage">
    <text>During embryonic development it is expressed in both hematopoietic and nonhematopoietic tissues.</text>
</comment>
<comment type="induction">
    <text>By retinoic acid. Likely target of the activated retinoic acid receptor alpha.</text>
</comment>
<comment type="similarity">
    <text evidence="4">Belongs to the LAPTM4/LAPTM5 transporter family.</text>
</comment>
<protein>
    <recommendedName>
        <fullName>Lysosomal-associated transmembrane protein 5</fullName>
    </recommendedName>
    <alternativeName>
        <fullName>Lysosomal-associated multitransmembrane protein 5</fullName>
    </alternativeName>
    <alternativeName>
        <fullName>Retinoic acid-inducible E3 protein</fullName>
    </alternativeName>
</protein>
<dbReference type="EMBL" id="U51239">
    <property type="protein sequence ID" value="AAB08976.1"/>
    <property type="molecule type" value="mRNA"/>
</dbReference>
<dbReference type="EMBL" id="U29539">
    <property type="protein sequence ID" value="AAB48192.1"/>
    <property type="molecule type" value="mRNA"/>
</dbReference>
<dbReference type="EMBL" id="BC020993">
    <property type="protein sequence ID" value="AAH20993.1"/>
    <property type="molecule type" value="mRNA"/>
</dbReference>
<dbReference type="EMBL" id="BC055057">
    <property type="protein sequence ID" value="AAH55057.1"/>
    <property type="molecule type" value="mRNA"/>
</dbReference>
<dbReference type="CCDS" id="CCDS18712.1"/>
<dbReference type="RefSeq" id="NP_034816.1">
    <property type="nucleotide sequence ID" value="NM_010686.4"/>
</dbReference>
<dbReference type="RefSeq" id="XP_017175490.1">
    <property type="nucleotide sequence ID" value="XM_017320001.1"/>
</dbReference>
<dbReference type="BioGRID" id="201109">
    <property type="interactions" value="6"/>
</dbReference>
<dbReference type="DIP" id="DIP-37698N"/>
<dbReference type="FunCoup" id="Q61168">
    <property type="interactions" value="375"/>
</dbReference>
<dbReference type="IntAct" id="Q61168">
    <property type="interactions" value="3"/>
</dbReference>
<dbReference type="MINT" id="Q61168"/>
<dbReference type="STRING" id="10090.ENSMUSP00000118415"/>
<dbReference type="TCDB" id="2.A.74.1.2">
    <property type="family name" value="the 4 tms multidrug endosomal transporter (met) family"/>
</dbReference>
<dbReference type="iPTMnet" id="Q61168"/>
<dbReference type="PhosphoSitePlus" id="Q61168"/>
<dbReference type="SwissPalm" id="Q61168"/>
<dbReference type="PaxDb" id="10090-ENSMUSP00000118415"/>
<dbReference type="ProteomicsDB" id="290009"/>
<dbReference type="Antibodypedia" id="54047">
    <property type="antibodies" value="90 antibodies from 18 providers"/>
</dbReference>
<dbReference type="DNASU" id="16792"/>
<dbReference type="Ensembl" id="ENSMUST00000151698.8">
    <property type="protein sequence ID" value="ENSMUSP00000118415.2"/>
    <property type="gene ID" value="ENSMUSG00000028581.18"/>
</dbReference>
<dbReference type="GeneID" id="16792"/>
<dbReference type="KEGG" id="mmu:16792"/>
<dbReference type="UCSC" id="uc008uzv.1">
    <property type="organism name" value="mouse"/>
</dbReference>
<dbReference type="AGR" id="MGI:108046"/>
<dbReference type="CTD" id="7805"/>
<dbReference type="MGI" id="MGI:108046">
    <property type="gene designation" value="Laptm5"/>
</dbReference>
<dbReference type="VEuPathDB" id="HostDB:ENSMUSG00000028581"/>
<dbReference type="eggNOG" id="ENOG502RY9P">
    <property type="taxonomic scope" value="Eukaryota"/>
</dbReference>
<dbReference type="GeneTree" id="ENSGT00940000153446"/>
<dbReference type="HOGENOM" id="CLU_1065422_0_0_1"/>
<dbReference type="InParanoid" id="Q61168"/>
<dbReference type="OMA" id="QICCCFN"/>
<dbReference type="OrthoDB" id="44557at9989"/>
<dbReference type="TreeFam" id="TF330843"/>
<dbReference type="BioGRID-ORCS" id="16792">
    <property type="hits" value="0 hits in 61 CRISPR screens"/>
</dbReference>
<dbReference type="ChiTaRS" id="Laptm5">
    <property type="organism name" value="mouse"/>
</dbReference>
<dbReference type="PRO" id="PR:Q61168"/>
<dbReference type="Proteomes" id="UP000000589">
    <property type="component" value="Chromosome 4"/>
</dbReference>
<dbReference type="RNAct" id="Q61168">
    <property type="molecule type" value="protein"/>
</dbReference>
<dbReference type="Bgee" id="ENSMUSG00000028581">
    <property type="expression patterns" value="Expressed in stroma of bone marrow and 256 other cell types or tissues"/>
</dbReference>
<dbReference type="ExpressionAtlas" id="Q61168">
    <property type="expression patterns" value="baseline and differential"/>
</dbReference>
<dbReference type="GO" id="GO:0005829">
    <property type="term" value="C:cytosol"/>
    <property type="evidence" value="ECO:0007669"/>
    <property type="project" value="GOC"/>
</dbReference>
<dbReference type="GO" id="GO:0005765">
    <property type="term" value="C:lysosomal membrane"/>
    <property type="evidence" value="ECO:0007669"/>
    <property type="project" value="UniProtKB-SubCell"/>
</dbReference>
<dbReference type="GO" id="GO:0005764">
    <property type="term" value="C:lysosome"/>
    <property type="evidence" value="ECO:0000314"/>
    <property type="project" value="ARUK-UCL"/>
</dbReference>
<dbReference type="GO" id="GO:0048471">
    <property type="term" value="C:perinuclear region of cytoplasm"/>
    <property type="evidence" value="ECO:0007669"/>
    <property type="project" value="Ensembl"/>
</dbReference>
<dbReference type="GO" id="GO:0005886">
    <property type="term" value="C:plasma membrane"/>
    <property type="evidence" value="ECO:0007669"/>
    <property type="project" value="Ensembl"/>
</dbReference>
<dbReference type="GO" id="GO:0032991">
    <property type="term" value="C:protein-containing complex"/>
    <property type="evidence" value="ECO:0007669"/>
    <property type="project" value="Ensembl"/>
</dbReference>
<dbReference type="GO" id="GO:0030133">
    <property type="term" value="C:transport vesicle"/>
    <property type="evidence" value="ECO:0007669"/>
    <property type="project" value="Ensembl"/>
</dbReference>
<dbReference type="GO" id="GO:0019899">
    <property type="term" value="F:enzyme binding"/>
    <property type="evidence" value="ECO:0000353"/>
    <property type="project" value="ARUK-UCL"/>
</dbReference>
<dbReference type="GO" id="GO:0140311">
    <property type="term" value="F:protein sequestering activity"/>
    <property type="evidence" value="ECO:0000315"/>
    <property type="project" value="ARUK-UCL"/>
</dbReference>
<dbReference type="GO" id="GO:0031625">
    <property type="term" value="F:ubiquitin protein ligase binding"/>
    <property type="evidence" value="ECO:0007669"/>
    <property type="project" value="Ensembl"/>
</dbReference>
<dbReference type="GO" id="GO:1990830">
    <property type="term" value="P:cellular response to leukemia inhibitory factor"/>
    <property type="evidence" value="ECO:0000270"/>
    <property type="project" value="MGI"/>
</dbReference>
<dbReference type="GO" id="GO:0002357">
    <property type="term" value="P:defense response to tumor cell"/>
    <property type="evidence" value="ECO:0007669"/>
    <property type="project" value="Ensembl"/>
</dbReference>
<dbReference type="GO" id="GO:0090160">
    <property type="term" value="P:Golgi to lysosome transport"/>
    <property type="evidence" value="ECO:0000314"/>
    <property type="project" value="ARUK-UCL"/>
</dbReference>
<dbReference type="GO" id="GO:0012502">
    <property type="term" value="P:induction of programmed cell death"/>
    <property type="evidence" value="ECO:0007669"/>
    <property type="project" value="Ensembl"/>
</dbReference>
<dbReference type="GO" id="GO:0006886">
    <property type="term" value="P:intracellular protein transport"/>
    <property type="evidence" value="ECO:0000315"/>
    <property type="project" value="ARUK-UCL"/>
</dbReference>
<dbReference type="GO" id="GO:0097193">
    <property type="term" value="P:intrinsic apoptotic signaling pathway"/>
    <property type="evidence" value="ECO:0007669"/>
    <property type="project" value="Ensembl"/>
</dbReference>
<dbReference type="GO" id="GO:0046007">
    <property type="term" value="P:negative regulation of activated T cell proliferation"/>
    <property type="evidence" value="ECO:0000315"/>
    <property type="project" value="ARUK-UCL"/>
</dbReference>
<dbReference type="GO" id="GO:1904093">
    <property type="term" value="P:negative regulation of autophagic cell death"/>
    <property type="evidence" value="ECO:0007669"/>
    <property type="project" value="Ensembl"/>
</dbReference>
<dbReference type="GO" id="GO:0050869">
    <property type="term" value="P:negative regulation of B cell activation"/>
    <property type="evidence" value="ECO:0000315"/>
    <property type="project" value="ARUK-UCL"/>
</dbReference>
<dbReference type="GO" id="GO:0032703">
    <property type="term" value="P:negative regulation of interleukin-2 production"/>
    <property type="evidence" value="ECO:0000315"/>
    <property type="project" value="ARUK-UCL"/>
</dbReference>
<dbReference type="GO" id="GO:0140646">
    <property type="term" value="P:negative regulation of pre-B cell receptor expression"/>
    <property type="evidence" value="ECO:0000315"/>
    <property type="project" value="ARUK-UCL"/>
</dbReference>
<dbReference type="GO" id="GO:0050868">
    <property type="term" value="P:negative regulation of T cell activation"/>
    <property type="evidence" value="ECO:0000315"/>
    <property type="project" value="ARUK-UCL"/>
</dbReference>
<dbReference type="GO" id="GO:0050860">
    <property type="term" value="P:negative regulation of T cell receptor signaling pathway"/>
    <property type="evidence" value="ECO:0000315"/>
    <property type="project" value="ARUK-UCL"/>
</dbReference>
<dbReference type="GO" id="GO:0032689">
    <property type="term" value="P:negative regulation of type II interferon production"/>
    <property type="evidence" value="ECO:0000315"/>
    <property type="project" value="ARUK-UCL"/>
</dbReference>
<dbReference type="GO" id="GO:0002720">
    <property type="term" value="P:positive regulation of cytokine production involved in immune response"/>
    <property type="evidence" value="ECO:0000315"/>
    <property type="project" value="ARUK-UCL"/>
</dbReference>
<dbReference type="GO" id="GO:0032735">
    <property type="term" value="P:positive regulation of interleukin-12 production"/>
    <property type="evidence" value="ECO:0000315"/>
    <property type="project" value="ARUK-UCL"/>
</dbReference>
<dbReference type="GO" id="GO:0032755">
    <property type="term" value="P:positive regulation of interleukin-6 production"/>
    <property type="evidence" value="ECO:0000315"/>
    <property type="project" value="ARUK-UCL"/>
</dbReference>
<dbReference type="GO" id="GO:0097214">
    <property type="term" value="P:positive regulation of lysosomal membrane permeability"/>
    <property type="evidence" value="ECO:0007669"/>
    <property type="project" value="Ensembl"/>
</dbReference>
<dbReference type="GO" id="GO:0060907">
    <property type="term" value="P:positive regulation of macrophage cytokine production"/>
    <property type="evidence" value="ECO:0000315"/>
    <property type="project" value="ARUK-UCL"/>
</dbReference>
<dbReference type="GO" id="GO:0043410">
    <property type="term" value="P:positive regulation of MAPK cascade"/>
    <property type="evidence" value="ECO:0000315"/>
    <property type="project" value="ARUK-UCL"/>
</dbReference>
<dbReference type="GO" id="GO:1901224">
    <property type="term" value="P:positive regulation of non-canonical NF-kappaB signal transduction"/>
    <property type="evidence" value="ECO:0000315"/>
    <property type="project" value="ARUK-UCL"/>
</dbReference>
<dbReference type="GO" id="GO:0031398">
    <property type="term" value="P:positive regulation of protein ubiquitination"/>
    <property type="evidence" value="ECO:0000315"/>
    <property type="project" value="ARUK-UCL"/>
</dbReference>
<dbReference type="GO" id="GO:1903052">
    <property type="term" value="P:positive regulation of proteolysis involved in protein catabolic process"/>
    <property type="evidence" value="ECO:0000315"/>
    <property type="project" value="ARUK-UCL"/>
</dbReference>
<dbReference type="GO" id="GO:2000646">
    <property type="term" value="P:positive regulation of receptor catabolic process"/>
    <property type="evidence" value="ECO:0000315"/>
    <property type="project" value="ARUK-UCL"/>
</dbReference>
<dbReference type="GO" id="GO:1903265">
    <property type="term" value="P:positive regulation of tumor necrosis factor-mediated signaling pathway"/>
    <property type="evidence" value="ECO:0000315"/>
    <property type="project" value="ARUK-UCL"/>
</dbReference>
<dbReference type="GO" id="GO:2000060">
    <property type="term" value="P:positive regulation of ubiquitin-dependent protein catabolic process"/>
    <property type="evidence" value="ECO:0000314"/>
    <property type="project" value="ARUK-UCL"/>
</dbReference>
<dbReference type="GO" id="GO:0061462">
    <property type="term" value="P:protein localization to lysosome"/>
    <property type="evidence" value="ECO:0000315"/>
    <property type="project" value="ARUK-UCL"/>
</dbReference>
<dbReference type="GO" id="GO:0006622">
    <property type="term" value="P:protein targeting to lysosome"/>
    <property type="evidence" value="ECO:0000314"/>
    <property type="project" value="ARUK-UCL"/>
</dbReference>
<dbReference type="InterPro" id="IPR004687">
    <property type="entry name" value="LAPTM4/5"/>
</dbReference>
<dbReference type="InterPro" id="IPR018396">
    <property type="entry name" value="LAPTM_4A/5"/>
</dbReference>
<dbReference type="InterPro" id="IPR051115">
    <property type="entry name" value="LAPTM_transporter"/>
</dbReference>
<dbReference type="NCBIfam" id="TIGR00799">
    <property type="entry name" value="mtp"/>
    <property type="match status" value="1"/>
</dbReference>
<dbReference type="PANTHER" id="PTHR12479">
    <property type="entry name" value="LYSOSOMAL-ASSOCIATED TRANSMEMBRANE PROTEIN"/>
    <property type="match status" value="1"/>
</dbReference>
<dbReference type="PANTHER" id="PTHR12479:SF2">
    <property type="entry name" value="LYSOSOMAL-ASSOCIATED TRANSMEMBRANE PROTEIN 5"/>
    <property type="match status" value="1"/>
</dbReference>
<dbReference type="Pfam" id="PF03821">
    <property type="entry name" value="Mtp"/>
    <property type="match status" value="1"/>
</dbReference>
<feature type="chain" id="PRO_0000084358" description="Lysosomal-associated transmembrane protein 5">
    <location>
        <begin position="1"/>
        <end position="261"/>
    </location>
</feature>
<feature type="transmembrane region" description="Helical" evidence="1">
    <location>
        <begin position="21"/>
        <end position="41"/>
    </location>
</feature>
<feature type="transmembrane region" description="Helical" evidence="1">
    <location>
        <begin position="65"/>
        <end position="85"/>
    </location>
</feature>
<feature type="transmembrane region" description="Helical" evidence="1">
    <location>
        <begin position="92"/>
        <end position="112"/>
    </location>
</feature>
<feature type="transmembrane region" description="Helical" evidence="1">
    <location>
        <begin position="133"/>
        <end position="153"/>
    </location>
</feature>
<feature type="transmembrane region" description="Helical" evidence="1">
    <location>
        <begin position="183"/>
        <end position="203"/>
    </location>
</feature>
<feature type="region of interest" description="Disordered" evidence="2">
    <location>
        <begin position="242"/>
        <end position="261"/>
    </location>
</feature>
<feature type="compositionally biased region" description="Pro residues" evidence="2">
    <location>
        <begin position="246"/>
        <end position="261"/>
    </location>
</feature>
<feature type="modified residue" description="Phosphotyrosine" evidence="5">
    <location>
        <position position="258"/>
    </location>
</feature>
<feature type="sequence conflict" description="In Ref. 2; AAB48192." evidence="4" ref="2">
    <original>P</original>
    <variation>A</variation>
    <location>
        <position position="56"/>
    </location>
</feature>
<feature type="sequence conflict" description="In Ref. 2; AAB48192." evidence="4" ref="2">
    <original>E</original>
    <variation>D</variation>
    <location>
        <position position="116"/>
    </location>
</feature>
<feature type="sequence conflict" description="In Ref. 2; AAB48192." evidence="4" ref="2">
    <original>P</original>
    <variation>S</variation>
    <location>
        <position position="126"/>
    </location>
</feature>
<proteinExistence type="evidence at protein level"/>
<gene>
    <name type="primary">Laptm5</name>
</gene>
<keyword id="KW-0458">Lysosome</keyword>
<keyword id="KW-0472">Membrane</keyword>
<keyword id="KW-0597">Phosphoprotein</keyword>
<keyword id="KW-1185">Reference proteome</keyword>
<keyword id="KW-0812">Transmembrane</keyword>
<keyword id="KW-1133">Transmembrane helix</keyword>
<keyword id="KW-0813">Transport</keyword>
<accession>Q61168</accession>
<accession>Q60923</accession>
<evidence type="ECO:0000255" key="1"/>
<evidence type="ECO:0000256" key="2">
    <source>
        <dbReference type="SAM" id="MobiDB-lite"/>
    </source>
</evidence>
<evidence type="ECO:0000269" key="3">
    <source>
    </source>
</evidence>
<evidence type="ECO:0000305" key="4"/>
<evidence type="ECO:0007744" key="5">
    <source>
    </source>
</evidence>
<sequence length="261" mass="29602">MASRAAPVRQTCCCFNIRVATIALAIYHIVMSVLLFIEHVVEVARGKVSCRFFKMPYLRMADLLSSFLLIGVLFIISISLLFGVVKNREKYLIPFLSLQIMDFLLCLLTLLGSYIELPAYLKLARPRPGPSKVPLMTLQLLDFCLSILTLCSSYMEVPTYLNFKSMNHMNYLPSQEGVPHSQFINMMLIFSVAFITVLILKVYMFKCVYTCYKFLKHMNSAMEDSSSKMFLKVALPSYEEALSLPPKTPEGDPAPPPYSEV</sequence>
<name>LAPM5_MOUSE</name>
<reference key="1">
    <citation type="journal article" date="1996" name="Genomics">
        <title>LAPTM5: a novel lysosomal-associated multispanning membrane protein preferentially expressed in hematopoietic cells.</title>
        <authorList>
            <person name="Adra C.N."/>
            <person name="Zhu S."/>
            <person name="Ko J.-L."/>
            <person name="Guillemot J.-C."/>
            <person name="Cuervo A.M."/>
            <person name="Kobayashi H."/>
            <person name="Horiuchi T."/>
            <person name="Lelias J.-M."/>
            <person name="Rowley J.D."/>
            <person name="Lim B."/>
        </authorList>
    </citation>
    <scope>NUCLEOTIDE SEQUENCE [MRNA]</scope>
    <scope>FUNCTION</scope>
    <scope>INTERACTION WITH UBIQUITIN</scope>
    <scope>SUBCELLULAR LOCATION</scope>
    <scope>TISSUE SPECIFICITY</scope>
    <source>
        <strain>Swiss Webster / NIH</strain>
    </source>
</reference>
<reference key="2">
    <citation type="journal article" date="1996" name="Blood">
        <title>E3, a hematopoietic-specific transcript directly regulated by the retinoic acid receptor alpha.</title>
        <authorList>
            <person name="Scott L.M."/>
            <person name="Mueller L."/>
            <person name="Collins S.J."/>
        </authorList>
    </citation>
    <scope>NUCLEOTIDE SEQUENCE [MRNA]</scope>
    <source>
        <strain>MDF1</strain>
    </source>
</reference>
<reference key="3">
    <citation type="journal article" date="2004" name="Genome Res.">
        <title>The status, quality, and expansion of the NIH full-length cDNA project: the Mammalian Gene Collection (MGC).</title>
        <authorList>
            <consortium name="The MGC Project Team"/>
        </authorList>
    </citation>
    <scope>NUCLEOTIDE SEQUENCE [LARGE SCALE MRNA]</scope>
    <source>
        <strain>FVB/N</strain>
        <tissue>Colon</tissue>
        <tissue>Mammary gland</tissue>
    </source>
</reference>
<reference key="4">
    <citation type="journal article" date="2007" name="J. Immunol.">
        <title>Quantitative time-resolved phosphoproteomic analysis of mast cell signaling.</title>
        <authorList>
            <person name="Cao L."/>
            <person name="Yu K."/>
            <person name="Banh C."/>
            <person name="Nguyen V."/>
            <person name="Ritz A."/>
            <person name="Raphael B.J."/>
            <person name="Kawakami Y."/>
            <person name="Kawakami T."/>
            <person name="Salomon A.R."/>
        </authorList>
    </citation>
    <scope>PHOSPHORYLATION [LARGE SCALE ANALYSIS] AT TYR-258</scope>
    <scope>IDENTIFICATION BY MASS SPECTROMETRY [LARGE SCALE ANALYSIS]</scope>
    <source>
        <tissue>Mast cell</tissue>
    </source>
</reference>
<organism>
    <name type="scientific">Mus musculus</name>
    <name type="common">Mouse</name>
    <dbReference type="NCBI Taxonomy" id="10090"/>
    <lineage>
        <taxon>Eukaryota</taxon>
        <taxon>Metazoa</taxon>
        <taxon>Chordata</taxon>
        <taxon>Craniata</taxon>
        <taxon>Vertebrata</taxon>
        <taxon>Euteleostomi</taxon>
        <taxon>Mammalia</taxon>
        <taxon>Eutheria</taxon>
        <taxon>Euarchontoglires</taxon>
        <taxon>Glires</taxon>
        <taxon>Rodentia</taxon>
        <taxon>Myomorpha</taxon>
        <taxon>Muroidea</taxon>
        <taxon>Muridae</taxon>
        <taxon>Murinae</taxon>
        <taxon>Mus</taxon>
        <taxon>Mus</taxon>
    </lineage>
</organism>